<protein>
    <recommendedName>
        <fullName evidence="1">UPF0210 protein SSU05_0296</fullName>
    </recommendedName>
</protein>
<dbReference type="EMBL" id="CP000407">
    <property type="protein sequence ID" value="ABP89264.1"/>
    <property type="molecule type" value="Genomic_DNA"/>
</dbReference>
<dbReference type="SMR" id="A4VT25"/>
<dbReference type="STRING" id="391295.SSU05_0296"/>
<dbReference type="KEGG" id="ssu:SSU05_0296"/>
<dbReference type="eggNOG" id="COG2848">
    <property type="taxonomic scope" value="Bacteria"/>
</dbReference>
<dbReference type="HOGENOM" id="CLU_048704_0_0_9"/>
<dbReference type="BioCyc" id="SSUI391295:GHI8-326-MONOMER"/>
<dbReference type="CDD" id="cd08025">
    <property type="entry name" value="RNR_PFL_like_DUF711"/>
    <property type="match status" value="1"/>
</dbReference>
<dbReference type="Gene3D" id="3.20.70.20">
    <property type="match status" value="1"/>
</dbReference>
<dbReference type="HAMAP" id="MF_01221">
    <property type="entry name" value="UPF0210"/>
    <property type="match status" value="1"/>
</dbReference>
<dbReference type="InterPro" id="IPR007841">
    <property type="entry name" value="UPF0210"/>
</dbReference>
<dbReference type="NCBIfam" id="NF003700">
    <property type="entry name" value="PRK05313.1"/>
    <property type="match status" value="1"/>
</dbReference>
<dbReference type="PANTHER" id="PTHR37560:SF1">
    <property type="entry name" value="UPF0210 PROTEIN MJ1665"/>
    <property type="match status" value="1"/>
</dbReference>
<dbReference type="PANTHER" id="PTHR37560">
    <property type="entry name" value="UPF0210 PROTEIN SPR0218"/>
    <property type="match status" value="1"/>
</dbReference>
<dbReference type="Pfam" id="PF05167">
    <property type="entry name" value="DUF711"/>
    <property type="match status" value="1"/>
</dbReference>
<dbReference type="SUPFAM" id="SSF51998">
    <property type="entry name" value="PFL-like glycyl radical enzymes"/>
    <property type="match status" value="1"/>
</dbReference>
<accession>A4VT25</accession>
<name>Y296_STRSY</name>
<proteinExistence type="inferred from homology"/>
<gene>
    <name type="ordered locus">SSU05_0296</name>
</gene>
<feature type="chain" id="PRO_1000066778" description="UPF0210 protein SSU05_0296">
    <location>
        <begin position="1"/>
        <end position="445"/>
    </location>
</feature>
<organism>
    <name type="scientific">Streptococcus suis (strain 05ZYH33)</name>
    <dbReference type="NCBI Taxonomy" id="391295"/>
    <lineage>
        <taxon>Bacteria</taxon>
        <taxon>Bacillati</taxon>
        <taxon>Bacillota</taxon>
        <taxon>Bacilli</taxon>
        <taxon>Lactobacillales</taxon>
        <taxon>Streptococcaceae</taxon>
        <taxon>Streptococcus</taxon>
    </lineage>
</organism>
<comment type="subunit">
    <text evidence="1">Homodimer.</text>
</comment>
<comment type="similarity">
    <text evidence="1">Belongs to the UPF0210 family.</text>
</comment>
<reference key="1">
    <citation type="journal article" date="2007" name="PLoS ONE">
        <title>A glimpse of streptococcal toxic shock syndrome from comparative genomics of S. suis 2 Chinese isolates.</title>
        <authorList>
            <person name="Chen C."/>
            <person name="Tang J."/>
            <person name="Dong W."/>
            <person name="Wang C."/>
            <person name="Feng Y."/>
            <person name="Wang J."/>
            <person name="Zheng F."/>
            <person name="Pan X."/>
            <person name="Liu D."/>
            <person name="Li M."/>
            <person name="Song Y."/>
            <person name="Zhu X."/>
            <person name="Sun H."/>
            <person name="Feng T."/>
            <person name="Guo Z."/>
            <person name="Ju A."/>
            <person name="Ge J."/>
            <person name="Dong Y."/>
            <person name="Sun W."/>
            <person name="Jiang Y."/>
            <person name="Wang J."/>
            <person name="Yan J."/>
            <person name="Yang H."/>
            <person name="Wang X."/>
            <person name="Gao G.F."/>
            <person name="Yang R."/>
            <person name="Wang J."/>
            <person name="Yu J."/>
        </authorList>
    </citation>
    <scope>NUCLEOTIDE SEQUENCE [LARGE SCALE GENOMIC DNA]</scope>
    <source>
        <strain>05ZYH33</strain>
    </source>
</reference>
<evidence type="ECO:0000255" key="1">
    <source>
        <dbReference type="HAMAP-Rule" id="MF_01221"/>
    </source>
</evidence>
<sequence>MDIRQVRETIEMIEEQNFDIRTITMGISLLDCIDSDIDKAAEKVYTKIVTKAKNLVAVGDEIAAELGIPIVNKRVSVTPIALIGAATDATDYLPLAHALDKAAHEIGIDFIGGFSALAQKGYQKGDEILINSIPQALAQTSKVCSSVNIGSTKTGINMTAVRDMGRIIKETAEASDMGAAKLVVFANAVEDNPFMAGAFHGVGEADVVINVGVSGPGVVKRALEKVRGESFDVVAETVKKTAFKITRIGQLVGNMASERLGVKFGIVDLSLAPTPAVGDSVARVLEEMGLETVGTHGTTAALALLNDAVKKGGVMACNQVGGLSGAFIPVSEDEGMIAAVQNGSLNLEKLEAMTAICSVGLDMIAIPETTPAETIAAMIADEAAIGVINQKTTAVRIIPLGKEGDMIEFGGLLGTAPVMKVNQASSVDFINRGGQIPAPIHSFKN</sequence>